<comment type="function">
    <text evidence="1 2">Component of the large ribosomal subunit (By similarity). Required for proper rRNA processing and maturation of 28S and 5.8S rRNAs (By similarity).</text>
</comment>
<comment type="subunit">
    <text evidence="1 2">Component of the large ribosomal subunit (By similarity). Interacts with RRP1B (By similarity). Component of the large ribosomal subunit. Interacts with RRP1B. Interacts with DHX33 (By similarity).</text>
</comment>
<comment type="subcellular location">
    <subcellularLocation>
        <location evidence="2">Cytoplasm</location>
        <location evidence="2">Cytosol</location>
    </subcellularLocation>
    <subcellularLocation>
        <location evidence="2">Cytoplasm</location>
    </subcellularLocation>
    <subcellularLocation>
        <location evidence="1">Rough endoplasmic reticulum</location>
    </subcellularLocation>
    <text evidence="1 2">Detected on cytosolic polysomes (By similarity). Detected in ribosomes that are associated with the rough endoplasmic reticulum (By similarity).</text>
</comment>
<comment type="similarity">
    <text evidence="3">Belongs to the eukaryotic ribosomal protein eL27 family.</text>
</comment>
<gene>
    <name type="primary">RPL27</name>
</gene>
<protein>
    <recommendedName>
        <fullName evidence="3">Large ribosomal subunit protein eL27</fullName>
    </recommendedName>
    <alternativeName>
        <fullName>60S ribosomal protein L27</fullName>
    </alternativeName>
</protein>
<keyword id="KW-0007">Acetylation</keyword>
<keyword id="KW-0963">Cytoplasm</keyword>
<keyword id="KW-0256">Endoplasmic reticulum</keyword>
<keyword id="KW-1185">Reference proteome</keyword>
<keyword id="KW-0687">Ribonucleoprotein</keyword>
<keyword id="KW-0689">Ribosomal protein</keyword>
<evidence type="ECO:0000250" key="1">
    <source>
        <dbReference type="UniProtKB" id="A1XQU5"/>
    </source>
</evidence>
<evidence type="ECO:0000250" key="2">
    <source>
        <dbReference type="UniProtKB" id="P61353"/>
    </source>
</evidence>
<evidence type="ECO:0000305" key="3"/>
<accession>P61356</accession>
<accession>Q3T0P1</accession>
<proteinExistence type="evidence at transcript level"/>
<reference key="1">
    <citation type="journal article" date="2003" name="Mol. Reprod. Dev.">
        <title>Characterization of gene expression profiles in early bovine pregnancy using a custom cDNA microarray.</title>
        <authorList>
            <person name="Ishiwata H."/>
            <person name="Katsuma S."/>
            <person name="Kizaki K."/>
            <person name="Patel O.V."/>
            <person name="Nakano H."/>
            <person name="Takahashi T."/>
            <person name="Imai K."/>
            <person name="Hirasawa A."/>
            <person name="Shiojima S."/>
            <person name="Ikawa H."/>
            <person name="Suzuki Y."/>
            <person name="Tsujimoto G."/>
            <person name="Izaike Y."/>
            <person name="Todoroki J."/>
            <person name="Hashizume K."/>
        </authorList>
    </citation>
    <scope>NUCLEOTIDE SEQUENCE [MRNA]</scope>
</reference>
<reference key="2">
    <citation type="submission" date="2005-08" db="EMBL/GenBank/DDBJ databases">
        <authorList>
            <consortium name="NIH - Mammalian Gene Collection (MGC) project"/>
        </authorList>
    </citation>
    <scope>NUCLEOTIDE SEQUENCE [LARGE SCALE MRNA]</scope>
    <source>
        <strain>Crossbred X Angus</strain>
        <tissue>Ileum</tissue>
    </source>
</reference>
<dbReference type="EMBL" id="AB098983">
    <property type="protein sequence ID" value="BAC56473.1"/>
    <property type="molecule type" value="mRNA"/>
</dbReference>
<dbReference type="EMBL" id="BC102313">
    <property type="protein sequence ID" value="AAI02314.1"/>
    <property type="molecule type" value="mRNA"/>
</dbReference>
<dbReference type="RefSeq" id="NP_001029223.1">
    <property type="nucleotide sequence ID" value="NM_001034051.2"/>
</dbReference>
<dbReference type="SMR" id="P61356"/>
<dbReference type="FunCoup" id="P61356">
    <property type="interactions" value="2945"/>
</dbReference>
<dbReference type="STRING" id="9913.ENSBTAP00000023183"/>
<dbReference type="PaxDb" id="9913-ENSBTAP00000023183"/>
<dbReference type="PeptideAtlas" id="P61356"/>
<dbReference type="Ensembl" id="ENSBTAT00000023183.6">
    <property type="protein sequence ID" value="ENSBTAP00000023183.5"/>
    <property type="gene ID" value="ENSBTAG00000017441.6"/>
</dbReference>
<dbReference type="GeneID" id="404137"/>
<dbReference type="KEGG" id="bta:404137"/>
<dbReference type="CTD" id="6155"/>
<dbReference type="VEuPathDB" id="HostDB:ENSBTAG00000017441"/>
<dbReference type="VGNC" id="VGNC:55868">
    <property type="gene designation" value="RPL27"/>
</dbReference>
<dbReference type="eggNOG" id="KOG3418">
    <property type="taxonomic scope" value="Eukaryota"/>
</dbReference>
<dbReference type="GeneTree" id="ENSGT00390000010721"/>
<dbReference type="HOGENOM" id="CLU_067359_0_1_1"/>
<dbReference type="InParanoid" id="P61356"/>
<dbReference type="OMA" id="NQWFFTK"/>
<dbReference type="OrthoDB" id="2365484at2759"/>
<dbReference type="TreeFam" id="TF314648"/>
<dbReference type="Reactome" id="R-BTA-156827">
    <property type="pathway name" value="L13a-mediated translational silencing of Ceruloplasmin expression"/>
</dbReference>
<dbReference type="Reactome" id="R-BTA-1799339">
    <property type="pathway name" value="SRP-dependent cotranslational protein targeting to membrane"/>
</dbReference>
<dbReference type="Reactome" id="R-BTA-6791226">
    <property type="pathway name" value="Major pathway of rRNA processing in the nucleolus and cytosol"/>
</dbReference>
<dbReference type="Reactome" id="R-BTA-72689">
    <property type="pathway name" value="Formation of a pool of free 40S subunits"/>
</dbReference>
<dbReference type="Reactome" id="R-BTA-72706">
    <property type="pathway name" value="GTP hydrolysis and joining of the 60S ribosomal subunit"/>
</dbReference>
<dbReference type="Reactome" id="R-BTA-975956">
    <property type="pathway name" value="Nonsense Mediated Decay (NMD) independent of the Exon Junction Complex (EJC)"/>
</dbReference>
<dbReference type="Reactome" id="R-BTA-975957">
    <property type="pathway name" value="Nonsense Mediated Decay (NMD) enhanced by the Exon Junction Complex (EJC)"/>
</dbReference>
<dbReference type="CD-CODE" id="D7FE2080">
    <property type="entry name" value="Nucleolus"/>
</dbReference>
<dbReference type="Proteomes" id="UP000009136">
    <property type="component" value="Chromosome 19"/>
</dbReference>
<dbReference type="Bgee" id="ENSBTAG00000017441">
    <property type="expression patterns" value="Expressed in diaphragm and 106 other cell types or tissues"/>
</dbReference>
<dbReference type="GO" id="GO:0098556">
    <property type="term" value="C:cytoplasmic side of rough endoplasmic reticulum membrane"/>
    <property type="evidence" value="ECO:0000250"/>
    <property type="project" value="UniProtKB"/>
</dbReference>
<dbReference type="GO" id="GO:0022625">
    <property type="term" value="C:cytosolic large ribosomal subunit"/>
    <property type="evidence" value="ECO:0000318"/>
    <property type="project" value="GO_Central"/>
</dbReference>
<dbReference type="GO" id="GO:0015934">
    <property type="term" value="C:large ribosomal subunit"/>
    <property type="evidence" value="ECO:0000250"/>
    <property type="project" value="UniProtKB"/>
</dbReference>
<dbReference type="GO" id="GO:0005730">
    <property type="term" value="C:nucleolus"/>
    <property type="evidence" value="ECO:0007669"/>
    <property type="project" value="Ensembl"/>
</dbReference>
<dbReference type="GO" id="GO:0005654">
    <property type="term" value="C:nucleoplasm"/>
    <property type="evidence" value="ECO:0007669"/>
    <property type="project" value="Ensembl"/>
</dbReference>
<dbReference type="GO" id="GO:0045202">
    <property type="term" value="C:synapse"/>
    <property type="evidence" value="ECO:0007669"/>
    <property type="project" value="Ensembl"/>
</dbReference>
<dbReference type="GO" id="GO:0003735">
    <property type="term" value="F:structural constituent of ribosome"/>
    <property type="evidence" value="ECO:0000318"/>
    <property type="project" value="GO_Central"/>
</dbReference>
<dbReference type="GO" id="GO:0006364">
    <property type="term" value="P:rRNA processing"/>
    <property type="evidence" value="ECO:0000250"/>
    <property type="project" value="UniProtKB"/>
</dbReference>
<dbReference type="GO" id="GO:0006412">
    <property type="term" value="P:translation"/>
    <property type="evidence" value="ECO:0007669"/>
    <property type="project" value="InterPro"/>
</dbReference>
<dbReference type="CDD" id="cd06090">
    <property type="entry name" value="KOW_RPL27"/>
    <property type="match status" value="1"/>
</dbReference>
<dbReference type="FunFam" id="2.30.30.770:FF:000001">
    <property type="entry name" value="60S ribosomal protein L27"/>
    <property type="match status" value="1"/>
</dbReference>
<dbReference type="Gene3D" id="2.30.30.770">
    <property type="match status" value="1"/>
</dbReference>
<dbReference type="InterPro" id="IPR005824">
    <property type="entry name" value="KOW"/>
</dbReference>
<dbReference type="InterPro" id="IPR001141">
    <property type="entry name" value="Ribosomal_eL27"/>
</dbReference>
<dbReference type="InterPro" id="IPR018262">
    <property type="entry name" value="Ribosomal_eL27_CS"/>
</dbReference>
<dbReference type="InterPro" id="IPR041991">
    <property type="entry name" value="Ribosomal_eL27_KOW"/>
</dbReference>
<dbReference type="InterPro" id="IPR038655">
    <property type="entry name" value="Ribosomal_eL27_sf"/>
</dbReference>
<dbReference type="InterPro" id="IPR008991">
    <property type="entry name" value="Translation_prot_SH3-like_sf"/>
</dbReference>
<dbReference type="PANTHER" id="PTHR10497">
    <property type="entry name" value="60S RIBOSOMAL PROTEIN L27"/>
    <property type="match status" value="1"/>
</dbReference>
<dbReference type="Pfam" id="PF00467">
    <property type="entry name" value="KOW"/>
    <property type="match status" value="1"/>
</dbReference>
<dbReference type="Pfam" id="PF01777">
    <property type="entry name" value="Ribosomal_L27e"/>
    <property type="match status" value="1"/>
</dbReference>
<dbReference type="SMART" id="SM00739">
    <property type="entry name" value="KOW"/>
    <property type="match status" value="1"/>
</dbReference>
<dbReference type="SUPFAM" id="SSF50104">
    <property type="entry name" value="Translation proteins SH3-like domain"/>
    <property type="match status" value="1"/>
</dbReference>
<dbReference type="PROSITE" id="PS01107">
    <property type="entry name" value="RIBOSOMAL_L27E"/>
    <property type="match status" value="1"/>
</dbReference>
<sequence length="136" mass="15798">MGKFMKPGKVVLVLAGRYSGRKAVIVKNIDDGTSDRPYSHALVAGIDRYPRKVTAAMGKKKIAKRSKIKSFVKVYNYNHLMPTRYSVDIPLDKTVVNKDVFRDPALKRKARREAKVKFEERYKTGKNKWFFQKLRF</sequence>
<name>RL27_BOVIN</name>
<feature type="chain" id="PRO_0000126074" description="Large ribosomal subunit protein eL27">
    <location>
        <begin position="1"/>
        <end position="136"/>
    </location>
</feature>
<feature type="domain" description="KOW">
    <location>
        <begin position="5"/>
        <end position="40"/>
    </location>
</feature>
<feature type="modified residue" description="N6-acetyllysine" evidence="2">
    <location>
        <position position="27"/>
    </location>
</feature>
<feature type="modified residue" description="N6-acetyllysine" evidence="2">
    <location>
        <position position="93"/>
    </location>
</feature>
<organism>
    <name type="scientific">Bos taurus</name>
    <name type="common">Bovine</name>
    <dbReference type="NCBI Taxonomy" id="9913"/>
    <lineage>
        <taxon>Eukaryota</taxon>
        <taxon>Metazoa</taxon>
        <taxon>Chordata</taxon>
        <taxon>Craniata</taxon>
        <taxon>Vertebrata</taxon>
        <taxon>Euteleostomi</taxon>
        <taxon>Mammalia</taxon>
        <taxon>Eutheria</taxon>
        <taxon>Laurasiatheria</taxon>
        <taxon>Artiodactyla</taxon>
        <taxon>Ruminantia</taxon>
        <taxon>Pecora</taxon>
        <taxon>Bovidae</taxon>
        <taxon>Bovinae</taxon>
        <taxon>Bos</taxon>
    </lineage>
</organism>